<sequence>MDKYDRLSKLGEGSYGVVYKCKNRDTGQIVAIKKFVETEDDPHIKKIALREIRMLKQLKHQNLVGLIEVFKRNRKLHLVFELCDRTVLHELEKNPHGVNDELIKKIIYQLLEALKFCHSHKCIHRDVKPENIFLTRNDQVKLGDFGFARIINTTEMYTDYVATRWYRSPELLVGDVQYGPPVDIWAVGCVYAELLTGEALWPGRSDIDQLYHIRKTLGEFLPRHISIFRTNQFFFGLSIPEPEHLEPLPSKLPNASSAQLDFLQKCFEMSPDRRFSCSELMLHGIFSNWILRIRQDESTPTGLTSKRSPNYLPLLNGNSNNLVSKNFSLQGGNHGNNNNNGNGINRNFLPTIS</sequence>
<dbReference type="EC" id="2.7.11.22"/>
<dbReference type="EMBL" id="BX284605">
    <property type="protein sequence ID" value="CAB63367.1"/>
    <property type="molecule type" value="Genomic_DNA"/>
</dbReference>
<dbReference type="RefSeq" id="NP_001256291.1">
    <property type="nucleotide sequence ID" value="NM_001269362.2"/>
</dbReference>
<dbReference type="SMR" id="Q9U2H1"/>
<dbReference type="FunCoup" id="Q9U2H1">
    <property type="interactions" value="21"/>
</dbReference>
<dbReference type="STRING" id="6239.Y42A5A.4b.1"/>
<dbReference type="PaxDb" id="6239-Y42A5A.4b"/>
<dbReference type="EnsemblMetazoa" id="Y42A5A.4a.1">
    <property type="protein sequence ID" value="Y42A5A.4a.1"/>
    <property type="gene ID" value="WBGene00012779"/>
</dbReference>
<dbReference type="GeneID" id="189841"/>
<dbReference type="KEGG" id="cel:CELE_Y42A5A.4"/>
<dbReference type="UCSC" id="Y42A5A.4">
    <property type="organism name" value="c. elegans"/>
</dbReference>
<dbReference type="AGR" id="WB:WBGene00012779"/>
<dbReference type="CTD" id="189841"/>
<dbReference type="WormBase" id="Y42A5A.4a">
    <property type="protein sequence ID" value="CE20258"/>
    <property type="gene ID" value="WBGene00012779"/>
    <property type="gene designation" value="cdkl-1"/>
</dbReference>
<dbReference type="GeneTree" id="ENSGT00940000166615"/>
<dbReference type="HOGENOM" id="CLU_000288_181_1_1"/>
<dbReference type="InParanoid" id="Q9U2H1"/>
<dbReference type="OrthoDB" id="548217at2759"/>
<dbReference type="PhylomeDB" id="Q9U2H1"/>
<dbReference type="PRO" id="PR:Q9U2H1"/>
<dbReference type="Proteomes" id="UP000001940">
    <property type="component" value="Chromosome V"/>
</dbReference>
<dbReference type="Bgee" id="WBGene00012779">
    <property type="expression patterns" value="Expressed in pharyngeal muscle cell (C elegans) and 3 other cell types or tissues"/>
</dbReference>
<dbReference type="ExpressionAtlas" id="Q9U2H1">
    <property type="expression patterns" value="differential"/>
</dbReference>
<dbReference type="GO" id="GO:0035869">
    <property type="term" value="C:ciliary transition zone"/>
    <property type="evidence" value="ECO:0000314"/>
    <property type="project" value="UniProtKB"/>
</dbReference>
<dbReference type="GO" id="GO:0005634">
    <property type="term" value="C:nucleus"/>
    <property type="evidence" value="ECO:0000318"/>
    <property type="project" value="GO_Central"/>
</dbReference>
<dbReference type="GO" id="GO:0005524">
    <property type="term" value="F:ATP binding"/>
    <property type="evidence" value="ECO:0007669"/>
    <property type="project" value="UniProtKB-KW"/>
</dbReference>
<dbReference type="GO" id="GO:0004693">
    <property type="term" value="F:cyclin-dependent protein serine/threonine kinase activity"/>
    <property type="evidence" value="ECO:0007669"/>
    <property type="project" value="UniProtKB-EC"/>
</dbReference>
<dbReference type="GO" id="GO:0106310">
    <property type="term" value="F:protein serine kinase activity"/>
    <property type="evidence" value="ECO:0007669"/>
    <property type="project" value="RHEA"/>
</dbReference>
<dbReference type="GO" id="GO:0004674">
    <property type="term" value="F:protein serine/threonine kinase activity"/>
    <property type="evidence" value="ECO:0000250"/>
    <property type="project" value="WormBase"/>
</dbReference>
<dbReference type="GO" id="GO:1905515">
    <property type="term" value="P:non-motile cilium assembly"/>
    <property type="evidence" value="ECO:0000315"/>
    <property type="project" value="WormBase"/>
</dbReference>
<dbReference type="GO" id="GO:1902017">
    <property type="term" value="P:regulation of cilium assembly"/>
    <property type="evidence" value="ECO:0000315"/>
    <property type="project" value="UniProtKB"/>
</dbReference>
<dbReference type="CDD" id="cd07847">
    <property type="entry name" value="STKc_CDKL1_4"/>
    <property type="match status" value="1"/>
</dbReference>
<dbReference type="FunFam" id="3.30.200.20:FF:000049">
    <property type="entry name" value="cyclin-dependent kinase-like 1 isoform X1"/>
    <property type="match status" value="1"/>
</dbReference>
<dbReference type="FunFam" id="1.10.510.10:FF:000624">
    <property type="entry name" value="Mitogen-activated protein kinase"/>
    <property type="match status" value="1"/>
</dbReference>
<dbReference type="Gene3D" id="3.30.200.20">
    <property type="entry name" value="Phosphorylase Kinase, domain 1"/>
    <property type="match status" value="1"/>
</dbReference>
<dbReference type="Gene3D" id="1.10.510.10">
    <property type="entry name" value="Transferase(Phosphotransferase) domain 1"/>
    <property type="match status" value="1"/>
</dbReference>
<dbReference type="InterPro" id="IPR050108">
    <property type="entry name" value="CDK"/>
</dbReference>
<dbReference type="InterPro" id="IPR011009">
    <property type="entry name" value="Kinase-like_dom_sf"/>
</dbReference>
<dbReference type="InterPro" id="IPR000719">
    <property type="entry name" value="Prot_kinase_dom"/>
</dbReference>
<dbReference type="InterPro" id="IPR017441">
    <property type="entry name" value="Protein_kinase_ATP_BS"/>
</dbReference>
<dbReference type="InterPro" id="IPR008271">
    <property type="entry name" value="Ser/Thr_kinase_AS"/>
</dbReference>
<dbReference type="PANTHER" id="PTHR24056">
    <property type="entry name" value="CELL DIVISION PROTEIN KINASE"/>
    <property type="match status" value="1"/>
</dbReference>
<dbReference type="PANTHER" id="PTHR24056:SF222">
    <property type="entry name" value="CYCLIN-DEPENDENT KINASE-LIKE 1"/>
    <property type="match status" value="1"/>
</dbReference>
<dbReference type="Pfam" id="PF00069">
    <property type="entry name" value="Pkinase"/>
    <property type="match status" value="1"/>
</dbReference>
<dbReference type="SMART" id="SM00220">
    <property type="entry name" value="S_TKc"/>
    <property type="match status" value="1"/>
</dbReference>
<dbReference type="SUPFAM" id="SSF56112">
    <property type="entry name" value="Protein kinase-like (PK-like)"/>
    <property type="match status" value="1"/>
</dbReference>
<dbReference type="PROSITE" id="PS00107">
    <property type="entry name" value="PROTEIN_KINASE_ATP"/>
    <property type="match status" value="1"/>
</dbReference>
<dbReference type="PROSITE" id="PS50011">
    <property type="entry name" value="PROTEIN_KINASE_DOM"/>
    <property type="match status" value="1"/>
</dbReference>
<dbReference type="PROSITE" id="PS00108">
    <property type="entry name" value="PROTEIN_KINASE_ST"/>
    <property type="match status" value="1"/>
</dbReference>
<accession>Q9U2H1</accession>
<reference key="1">
    <citation type="journal article" date="1998" name="Science">
        <title>Genome sequence of the nematode C. elegans: a platform for investigating biology.</title>
        <authorList>
            <consortium name="The C. elegans sequencing consortium"/>
        </authorList>
    </citation>
    <scope>NUCLEOTIDE SEQUENCE [LARGE SCALE GENOMIC DNA]</scope>
    <source>
        <strain>Bristol N2</strain>
    </source>
</reference>
<reference key="2">
    <citation type="journal article" date="2018" name="Cell Rep.">
        <title>CDKL Family Kinases Have Evolved Distinct Structural Features and Ciliary Function.</title>
        <authorList>
            <person name="Canning P."/>
            <person name="Park K."/>
            <person name="Goncalves J."/>
            <person name="Li C."/>
            <person name="Howard C.J."/>
            <person name="Sharpe T.D."/>
            <person name="Holt L.J."/>
            <person name="Pelletier L."/>
            <person name="Bullock A.N."/>
            <person name="Leroux M.R."/>
        </authorList>
    </citation>
    <scope>TISSUE SPECIFICITY</scope>
    <scope>SUBCELLULAR LOCATION</scope>
    <scope>FUNCTION</scope>
    <scope>MUTAGENESIS OF GLY-11; LYS-33; PRO-169 AND LEU-210</scope>
</reference>
<evidence type="ECO:0000255" key="1">
    <source>
        <dbReference type="PROSITE-ProRule" id="PRU00159"/>
    </source>
</evidence>
<evidence type="ECO:0000256" key="2">
    <source>
        <dbReference type="SAM" id="MobiDB-lite"/>
    </source>
</evidence>
<evidence type="ECO:0000269" key="3">
    <source>
    </source>
</evidence>
<evidence type="ECO:0000305" key="4"/>
<evidence type="ECO:0000312" key="5">
    <source>
        <dbReference type="WormBase" id="Y42A5A.4a"/>
    </source>
</evidence>
<gene>
    <name evidence="5" type="primary">cdkl-1</name>
    <name evidence="5" type="ORF">Y42A5A.4</name>
</gene>
<comment type="function">
    <text evidence="3">Modulates cilium assembly.</text>
</comment>
<comment type="catalytic activity">
    <reaction>
        <text>L-seryl-[protein] + ATP = O-phospho-L-seryl-[protein] + ADP + H(+)</text>
        <dbReference type="Rhea" id="RHEA:17989"/>
        <dbReference type="Rhea" id="RHEA-COMP:9863"/>
        <dbReference type="Rhea" id="RHEA-COMP:11604"/>
        <dbReference type="ChEBI" id="CHEBI:15378"/>
        <dbReference type="ChEBI" id="CHEBI:29999"/>
        <dbReference type="ChEBI" id="CHEBI:30616"/>
        <dbReference type="ChEBI" id="CHEBI:83421"/>
        <dbReference type="ChEBI" id="CHEBI:456216"/>
        <dbReference type="EC" id="2.7.11.22"/>
    </reaction>
</comment>
<comment type="catalytic activity">
    <reaction>
        <text>L-threonyl-[protein] + ATP = O-phospho-L-threonyl-[protein] + ADP + H(+)</text>
        <dbReference type="Rhea" id="RHEA:46608"/>
        <dbReference type="Rhea" id="RHEA-COMP:11060"/>
        <dbReference type="Rhea" id="RHEA-COMP:11605"/>
        <dbReference type="ChEBI" id="CHEBI:15378"/>
        <dbReference type="ChEBI" id="CHEBI:30013"/>
        <dbReference type="ChEBI" id="CHEBI:30616"/>
        <dbReference type="ChEBI" id="CHEBI:61977"/>
        <dbReference type="ChEBI" id="CHEBI:456216"/>
        <dbReference type="EC" id="2.7.11.22"/>
    </reaction>
</comment>
<comment type="subcellular location">
    <subcellularLocation>
        <location evidence="3">Cell projection</location>
        <location evidence="3">Cilium</location>
    </subcellularLocation>
    <text evidence="3">Localizes to the ciliary transitional zone in head and tail neurons.</text>
</comment>
<comment type="tissue specificity">
    <text evidence="3">Specifically expressed in head and tail ciliated sensory neurons.</text>
</comment>
<comment type="similarity">
    <text evidence="1">Belongs to the protein kinase superfamily. Ser/Thr protein kinase family.</text>
</comment>
<feature type="chain" id="PRO_0000444245" description="Cyclin-dependent kinase-like 1">
    <location>
        <begin position="1"/>
        <end position="353"/>
    </location>
</feature>
<feature type="domain" description="Protein kinase" evidence="1">
    <location>
        <begin position="4"/>
        <end position="286"/>
    </location>
</feature>
<feature type="region of interest" description="Disordered" evidence="2">
    <location>
        <begin position="331"/>
        <end position="353"/>
    </location>
</feature>
<feature type="compositionally biased region" description="Low complexity" evidence="2">
    <location>
        <begin position="335"/>
        <end position="347"/>
    </location>
</feature>
<feature type="active site" description="Proton acceptor" evidence="1">
    <location>
        <position position="126"/>
    </location>
</feature>
<feature type="binding site" evidence="1">
    <location>
        <begin position="10"/>
        <end position="18"/>
    </location>
    <ligand>
        <name>ATP</name>
        <dbReference type="ChEBI" id="CHEBI:30616"/>
    </ligand>
</feature>
<feature type="binding site" evidence="1">
    <location>
        <position position="33"/>
    </location>
    <ligand>
        <name>ATP</name>
        <dbReference type="ChEBI" id="CHEBI:30616"/>
    </ligand>
</feature>
<feature type="mutagenesis site" description="Does not localize to the ciliary transition zone." evidence="3">
    <original>G</original>
    <variation>R</variation>
    <location>
        <position position="11"/>
    </location>
</feature>
<feature type="mutagenesis site" description="Increases cilium length. Affects localization to the ciliary transition zone." evidence="3">
    <original>K</original>
    <variation>R</variation>
    <location>
        <position position="33"/>
    </location>
</feature>
<feature type="mutagenesis site" description="Does not affect localization to the ciliary transition zone." evidence="3">
    <original>P</original>
    <variation>L</variation>
    <location>
        <position position="169"/>
    </location>
</feature>
<feature type="mutagenesis site" description="Does not localize to the ciliary transition zonee." evidence="3">
    <original>L</original>
    <variation>P</variation>
    <location>
        <position position="210"/>
    </location>
</feature>
<name>CDKL1_CAEEL</name>
<keyword id="KW-0067">ATP-binding</keyword>
<keyword id="KW-0966">Cell projection</keyword>
<keyword id="KW-0969">Cilium</keyword>
<keyword id="KW-0970">Cilium biogenesis/degradation</keyword>
<keyword id="KW-0418">Kinase</keyword>
<keyword id="KW-0547">Nucleotide-binding</keyword>
<keyword id="KW-1185">Reference proteome</keyword>
<keyword id="KW-0723">Serine/threonine-protein kinase</keyword>
<keyword id="KW-0808">Transferase</keyword>
<proteinExistence type="evidence at protein level"/>
<protein>
    <recommendedName>
        <fullName evidence="4">Cyclin-dependent kinase-like 1</fullName>
        <ecNumber>2.7.11.22</ecNumber>
    </recommendedName>
</protein>
<organism>
    <name type="scientific">Caenorhabditis elegans</name>
    <dbReference type="NCBI Taxonomy" id="6239"/>
    <lineage>
        <taxon>Eukaryota</taxon>
        <taxon>Metazoa</taxon>
        <taxon>Ecdysozoa</taxon>
        <taxon>Nematoda</taxon>
        <taxon>Chromadorea</taxon>
        <taxon>Rhabditida</taxon>
        <taxon>Rhabditina</taxon>
        <taxon>Rhabditomorpha</taxon>
        <taxon>Rhabditoidea</taxon>
        <taxon>Rhabditidae</taxon>
        <taxon>Peloderinae</taxon>
        <taxon>Caenorhabditis</taxon>
    </lineage>
</organism>